<protein>
    <recommendedName>
        <fullName evidence="1">Probable transcriptional regulatory protein cauri_1421</fullName>
    </recommendedName>
</protein>
<keyword id="KW-0963">Cytoplasm</keyword>
<keyword id="KW-0238">DNA-binding</keyword>
<keyword id="KW-1185">Reference proteome</keyword>
<keyword id="KW-0804">Transcription</keyword>
<keyword id="KW-0805">Transcription regulation</keyword>
<dbReference type="EMBL" id="CP001601">
    <property type="protein sequence ID" value="ACP33014.1"/>
    <property type="molecule type" value="Genomic_DNA"/>
</dbReference>
<dbReference type="RefSeq" id="WP_010190178.1">
    <property type="nucleotide sequence ID" value="NC_012590.1"/>
</dbReference>
<dbReference type="SMR" id="C3PGR0"/>
<dbReference type="STRING" id="548476.cauri_1421"/>
<dbReference type="GeneID" id="31924047"/>
<dbReference type="KEGG" id="car:cauri_1421"/>
<dbReference type="eggNOG" id="COG0217">
    <property type="taxonomic scope" value="Bacteria"/>
</dbReference>
<dbReference type="HOGENOM" id="CLU_062974_2_2_11"/>
<dbReference type="OrthoDB" id="9781053at2"/>
<dbReference type="Proteomes" id="UP000002077">
    <property type="component" value="Chromosome"/>
</dbReference>
<dbReference type="GO" id="GO:0005829">
    <property type="term" value="C:cytosol"/>
    <property type="evidence" value="ECO:0007669"/>
    <property type="project" value="TreeGrafter"/>
</dbReference>
<dbReference type="GO" id="GO:0003677">
    <property type="term" value="F:DNA binding"/>
    <property type="evidence" value="ECO:0007669"/>
    <property type="project" value="UniProtKB-UniRule"/>
</dbReference>
<dbReference type="GO" id="GO:0006355">
    <property type="term" value="P:regulation of DNA-templated transcription"/>
    <property type="evidence" value="ECO:0007669"/>
    <property type="project" value="UniProtKB-UniRule"/>
</dbReference>
<dbReference type="FunFam" id="1.10.10.200:FF:000002">
    <property type="entry name" value="Probable transcriptional regulatory protein CLM62_37755"/>
    <property type="match status" value="1"/>
</dbReference>
<dbReference type="Gene3D" id="1.10.10.200">
    <property type="match status" value="1"/>
</dbReference>
<dbReference type="Gene3D" id="3.30.70.980">
    <property type="match status" value="2"/>
</dbReference>
<dbReference type="HAMAP" id="MF_00693">
    <property type="entry name" value="Transcrip_reg_TACO1"/>
    <property type="match status" value="1"/>
</dbReference>
<dbReference type="InterPro" id="IPR017856">
    <property type="entry name" value="Integrase-like_N"/>
</dbReference>
<dbReference type="InterPro" id="IPR048300">
    <property type="entry name" value="TACO1_YebC-like_2nd/3rd_dom"/>
</dbReference>
<dbReference type="InterPro" id="IPR049083">
    <property type="entry name" value="TACO1_YebC_N"/>
</dbReference>
<dbReference type="InterPro" id="IPR002876">
    <property type="entry name" value="Transcrip_reg_TACO1-like"/>
</dbReference>
<dbReference type="InterPro" id="IPR026564">
    <property type="entry name" value="Transcrip_reg_TACO1-like_dom3"/>
</dbReference>
<dbReference type="InterPro" id="IPR029072">
    <property type="entry name" value="YebC-like"/>
</dbReference>
<dbReference type="NCBIfam" id="NF001030">
    <property type="entry name" value="PRK00110.1"/>
    <property type="match status" value="1"/>
</dbReference>
<dbReference type="NCBIfam" id="NF009044">
    <property type="entry name" value="PRK12378.1"/>
    <property type="match status" value="1"/>
</dbReference>
<dbReference type="NCBIfam" id="TIGR01033">
    <property type="entry name" value="YebC/PmpR family DNA-binding transcriptional regulator"/>
    <property type="match status" value="1"/>
</dbReference>
<dbReference type="PANTHER" id="PTHR12532:SF6">
    <property type="entry name" value="TRANSCRIPTIONAL REGULATORY PROTEIN YEBC-RELATED"/>
    <property type="match status" value="1"/>
</dbReference>
<dbReference type="PANTHER" id="PTHR12532">
    <property type="entry name" value="TRANSLATIONAL ACTIVATOR OF CYTOCHROME C OXIDASE 1"/>
    <property type="match status" value="1"/>
</dbReference>
<dbReference type="Pfam" id="PF20772">
    <property type="entry name" value="TACO1_YebC_N"/>
    <property type="match status" value="1"/>
</dbReference>
<dbReference type="Pfam" id="PF01709">
    <property type="entry name" value="Transcrip_reg"/>
    <property type="match status" value="1"/>
</dbReference>
<dbReference type="SUPFAM" id="SSF75625">
    <property type="entry name" value="YebC-like"/>
    <property type="match status" value="1"/>
</dbReference>
<reference key="1">
    <citation type="journal article" date="2010" name="BMC Genomics">
        <title>Complete genome sequence and lifestyle of black-pigmented Corynebacterium aurimucosum ATCC 700975 (formerly C. nigricans CN-1) isolated from a vaginal swab of a woman with spontaneous abortion.</title>
        <authorList>
            <person name="Trost E."/>
            <person name="Gotker S."/>
            <person name="Schneider J."/>
            <person name="Schneiker-Bekel S."/>
            <person name="Szczepanowski R."/>
            <person name="Tilker A."/>
            <person name="Viehoever P."/>
            <person name="Arnold W."/>
            <person name="Bekel T."/>
            <person name="Blom J."/>
            <person name="Gartemann K.H."/>
            <person name="Linke B."/>
            <person name="Goesmann A."/>
            <person name="Puhler A."/>
            <person name="Shukla S.K."/>
            <person name="Tauch A."/>
        </authorList>
    </citation>
    <scope>NUCLEOTIDE SEQUENCE [LARGE SCALE GENOMIC DNA]</scope>
    <source>
        <strain>ATCC 700975 / DSM 44827 / CIP 107346 / CN-1</strain>
    </source>
</reference>
<feature type="chain" id="PRO_1000200090" description="Probable transcriptional regulatory protein cauri_1421">
    <location>
        <begin position="1"/>
        <end position="251"/>
    </location>
</feature>
<feature type="region of interest" description="Disordered" evidence="2">
    <location>
        <begin position="1"/>
        <end position="21"/>
    </location>
</feature>
<name>Y1421_CORA7</name>
<proteinExistence type="inferred from homology"/>
<organism>
    <name type="scientific">Corynebacterium aurimucosum (strain ATCC 700975 / DSM 44827 / CIP 107346 / CN-1)</name>
    <name type="common">Corynebacterium nigricans</name>
    <dbReference type="NCBI Taxonomy" id="548476"/>
    <lineage>
        <taxon>Bacteria</taxon>
        <taxon>Bacillati</taxon>
        <taxon>Actinomycetota</taxon>
        <taxon>Actinomycetes</taxon>
        <taxon>Mycobacteriales</taxon>
        <taxon>Corynebacteriaceae</taxon>
        <taxon>Corynebacterium</taxon>
    </lineage>
</organism>
<accession>C3PGR0</accession>
<gene>
    <name type="ordered locus">cauri_1421</name>
</gene>
<evidence type="ECO:0000255" key="1">
    <source>
        <dbReference type="HAMAP-Rule" id="MF_00693"/>
    </source>
</evidence>
<evidence type="ECO:0000256" key="2">
    <source>
        <dbReference type="SAM" id="MobiDB-lite"/>
    </source>
</evidence>
<sequence>MAGHSKWATTKHKKAANDAKRGKEFAKLIKNIEVAARTGGGDPAANPTLDDMIKKAKKASVPNDNIERARKRGSGEEAGGADWETVMYEGYGPNGVAMLIECLTDNRNRAATDVRTAMTKNGGNLGESGSVAYMFSRTGLVMVEKGELSEDDILIAVLEAGAEEVNDNGEKFEITCAPGDVPAVREALVAADIEVDDTDTDFRASVEVPLQADDARKIFRLIDALEDSDDVQNVYTNMDLSEEVLAELGED</sequence>
<comment type="subcellular location">
    <subcellularLocation>
        <location evidence="1">Cytoplasm</location>
    </subcellularLocation>
</comment>
<comment type="similarity">
    <text evidence="1">Belongs to the TACO1 family.</text>
</comment>